<protein>
    <recommendedName>
        <fullName evidence="1">Glutamyl-tRNA(Gln) amidotransferase subunit A</fullName>
        <shortName evidence="1">Glu-ADT subunit A</shortName>
        <ecNumber evidence="1">6.3.5.7</ecNumber>
    </recommendedName>
</protein>
<evidence type="ECO:0000255" key="1">
    <source>
        <dbReference type="HAMAP-Rule" id="MF_00120"/>
    </source>
</evidence>
<sequence length="485" mass="52821">MSIRYESVENLLTLIKDKKIKPSDVVKDIYDAIEETDPTIKSFLALDKENAIKKAQELDELQAKDQMDGKLFGIPMGIKDNIITNGLETTCASKMLEGFVPIYESTVMEKLHNENAVLIGKLNMDEFAMGGSTETSYFKKTVNPFDHKAVPGGSSGGSAAAVAAGLVPFSLGSDTGGSIRQPAAYCGVVGMKPTYGRVSRFGLVAFASSLDQIGPLTRNVKDNAIVLEAISGADVNDSTSAPVDDVDFTSEIGKDIKGLKVALPKEYLGEGVADDVKEAVQNAVETLKSLGAVVEEVSLPNTKFGIPSYYVIASSEASSNLSRFDGIRYGYHSKEAHSLEELYKMSRSEGFGKEVKRRIFLGTFALSSGYYDAYYKKSQKVRTLIKNDFDKVFENYDVVVGPTAPTTAFNLGEEIDDPLTMYANDLLTTPVNLAGLPGISVPCGQSNGRPIGLQFIGKPFDEKTLYRVAYQYETQYNLHDVYEKL</sequence>
<gene>
    <name evidence="1" type="primary">gatA</name>
    <name type="ordered locus">SAUSA300_1881</name>
</gene>
<reference key="1">
    <citation type="journal article" date="2006" name="Lancet">
        <title>Complete genome sequence of USA300, an epidemic clone of community-acquired meticillin-resistant Staphylococcus aureus.</title>
        <authorList>
            <person name="Diep B.A."/>
            <person name="Gill S.R."/>
            <person name="Chang R.F."/>
            <person name="Phan T.H."/>
            <person name="Chen J.H."/>
            <person name="Davidson M.G."/>
            <person name="Lin F."/>
            <person name="Lin J."/>
            <person name="Carleton H.A."/>
            <person name="Mongodin E.F."/>
            <person name="Sensabaugh G.F."/>
            <person name="Perdreau-Remington F."/>
        </authorList>
    </citation>
    <scope>NUCLEOTIDE SEQUENCE [LARGE SCALE GENOMIC DNA]</scope>
    <source>
        <strain>USA300</strain>
    </source>
</reference>
<dbReference type="EC" id="6.3.5.7" evidence="1"/>
<dbReference type="EMBL" id="CP000255">
    <property type="protein sequence ID" value="ABD22273.1"/>
    <property type="molecule type" value="Genomic_DNA"/>
</dbReference>
<dbReference type="RefSeq" id="WP_000027928.1">
    <property type="nucleotide sequence ID" value="NZ_CP027476.1"/>
</dbReference>
<dbReference type="SMR" id="Q2FFJ5"/>
<dbReference type="KEGG" id="saa:SAUSA300_1881"/>
<dbReference type="HOGENOM" id="CLU_009600_0_3_9"/>
<dbReference type="OMA" id="QPASYCG"/>
<dbReference type="Proteomes" id="UP000001939">
    <property type="component" value="Chromosome"/>
</dbReference>
<dbReference type="GO" id="GO:0030956">
    <property type="term" value="C:glutamyl-tRNA(Gln) amidotransferase complex"/>
    <property type="evidence" value="ECO:0007669"/>
    <property type="project" value="InterPro"/>
</dbReference>
<dbReference type="GO" id="GO:0005524">
    <property type="term" value="F:ATP binding"/>
    <property type="evidence" value="ECO:0007669"/>
    <property type="project" value="UniProtKB-KW"/>
</dbReference>
<dbReference type="GO" id="GO:0050567">
    <property type="term" value="F:glutaminyl-tRNA synthase (glutamine-hydrolyzing) activity"/>
    <property type="evidence" value="ECO:0007669"/>
    <property type="project" value="UniProtKB-UniRule"/>
</dbReference>
<dbReference type="GO" id="GO:0006412">
    <property type="term" value="P:translation"/>
    <property type="evidence" value="ECO:0007669"/>
    <property type="project" value="UniProtKB-UniRule"/>
</dbReference>
<dbReference type="Gene3D" id="3.90.1300.10">
    <property type="entry name" value="Amidase signature (AS) domain"/>
    <property type="match status" value="1"/>
</dbReference>
<dbReference type="HAMAP" id="MF_00120">
    <property type="entry name" value="GatA"/>
    <property type="match status" value="1"/>
</dbReference>
<dbReference type="InterPro" id="IPR000120">
    <property type="entry name" value="Amidase"/>
</dbReference>
<dbReference type="InterPro" id="IPR020556">
    <property type="entry name" value="Amidase_CS"/>
</dbReference>
<dbReference type="InterPro" id="IPR023631">
    <property type="entry name" value="Amidase_dom"/>
</dbReference>
<dbReference type="InterPro" id="IPR036928">
    <property type="entry name" value="AS_sf"/>
</dbReference>
<dbReference type="InterPro" id="IPR004412">
    <property type="entry name" value="GatA"/>
</dbReference>
<dbReference type="NCBIfam" id="TIGR00132">
    <property type="entry name" value="gatA"/>
    <property type="match status" value="1"/>
</dbReference>
<dbReference type="PANTHER" id="PTHR11895:SF151">
    <property type="entry name" value="GLUTAMYL-TRNA(GLN) AMIDOTRANSFERASE SUBUNIT A"/>
    <property type="match status" value="1"/>
</dbReference>
<dbReference type="PANTHER" id="PTHR11895">
    <property type="entry name" value="TRANSAMIDASE"/>
    <property type="match status" value="1"/>
</dbReference>
<dbReference type="Pfam" id="PF01425">
    <property type="entry name" value="Amidase"/>
    <property type="match status" value="1"/>
</dbReference>
<dbReference type="SUPFAM" id="SSF75304">
    <property type="entry name" value="Amidase signature (AS) enzymes"/>
    <property type="match status" value="1"/>
</dbReference>
<dbReference type="PROSITE" id="PS00571">
    <property type="entry name" value="AMIDASES"/>
    <property type="match status" value="1"/>
</dbReference>
<comment type="function">
    <text evidence="1">Allows the formation of correctly charged Gln-tRNA(Gln) through the transamidation of misacylated Glu-tRNA(Gln) in organisms which lack glutaminyl-tRNA synthetase. The reaction takes place in the presence of glutamine and ATP through an activated gamma-phospho-Glu-tRNA(Gln).</text>
</comment>
<comment type="catalytic activity">
    <reaction evidence="1">
        <text>L-glutamyl-tRNA(Gln) + L-glutamine + ATP + H2O = L-glutaminyl-tRNA(Gln) + L-glutamate + ADP + phosphate + H(+)</text>
        <dbReference type="Rhea" id="RHEA:17521"/>
        <dbReference type="Rhea" id="RHEA-COMP:9681"/>
        <dbReference type="Rhea" id="RHEA-COMP:9684"/>
        <dbReference type="ChEBI" id="CHEBI:15377"/>
        <dbReference type="ChEBI" id="CHEBI:15378"/>
        <dbReference type="ChEBI" id="CHEBI:29985"/>
        <dbReference type="ChEBI" id="CHEBI:30616"/>
        <dbReference type="ChEBI" id="CHEBI:43474"/>
        <dbReference type="ChEBI" id="CHEBI:58359"/>
        <dbReference type="ChEBI" id="CHEBI:78520"/>
        <dbReference type="ChEBI" id="CHEBI:78521"/>
        <dbReference type="ChEBI" id="CHEBI:456216"/>
        <dbReference type="EC" id="6.3.5.7"/>
    </reaction>
</comment>
<comment type="subunit">
    <text evidence="1">Heterotrimer of A, B and C subunits.</text>
</comment>
<comment type="similarity">
    <text evidence="1">Belongs to the amidase family. GatA subfamily.</text>
</comment>
<proteinExistence type="inferred from homology"/>
<feature type="chain" id="PRO_0000241154" description="Glutamyl-tRNA(Gln) amidotransferase subunit A">
    <location>
        <begin position="1"/>
        <end position="485"/>
    </location>
</feature>
<feature type="active site" description="Charge relay system" evidence="1">
    <location>
        <position position="79"/>
    </location>
</feature>
<feature type="active site" description="Charge relay system" evidence="1">
    <location>
        <position position="154"/>
    </location>
</feature>
<feature type="active site" description="Acyl-ester intermediate" evidence="1">
    <location>
        <position position="178"/>
    </location>
</feature>
<organism>
    <name type="scientific">Staphylococcus aureus (strain USA300)</name>
    <dbReference type="NCBI Taxonomy" id="367830"/>
    <lineage>
        <taxon>Bacteria</taxon>
        <taxon>Bacillati</taxon>
        <taxon>Bacillota</taxon>
        <taxon>Bacilli</taxon>
        <taxon>Bacillales</taxon>
        <taxon>Staphylococcaceae</taxon>
        <taxon>Staphylococcus</taxon>
    </lineage>
</organism>
<accession>Q2FFJ5</accession>
<name>GATA_STAA3</name>
<keyword id="KW-0067">ATP-binding</keyword>
<keyword id="KW-0436">Ligase</keyword>
<keyword id="KW-0547">Nucleotide-binding</keyword>
<keyword id="KW-0648">Protein biosynthesis</keyword>